<gene>
    <name type="primary">EMC2</name>
    <name type="ordered locus">YJR088C</name>
    <name type="ORF">J1875</name>
</gene>
<sequence length="292" mass="33855">MLKDLVREKLLTIMNTKAYTQFNPEQLLQLENEMKIYMKSGDSALTEGNYFFLMEMLFYVLVYRNQDVDAQVVYNTLRDRLGENSYKMVIMKATLLQINGNDKGAIEYLENLLNDDLEYETDFVTYVSIAKKLIAIKTTSKNLSQESVLKEVVALTDKFPLDAELWWYASEIYFEMGQFEKACYCLEQVLCITPFNYACFGRLSETLYYEALRSKKQTKTELLEKALKNALRSVELSELYLKGWALVNIISRELGRNKQNDLIKLSASKLKEISAKSNNKDKITAELILNKI</sequence>
<proteinExistence type="evidence at protein level"/>
<accession>P47133</accession>
<accession>D6VWQ6</accession>
<accession>Q66R61</accession>
<dbReference type="EMBL" id="Z49586">
    <property type="protein sequence ID" value="CAA89615.1"/>
    <property type="molecule type" value="Genomic_DNA"/>
</dbReference>
<dbReference type="EMBL" id="L47993">
    <property type="protein sequence ID" value="AAB39311.1"/>
    <property type="molecule type" value="Genomic_DNA"/>
</dbReference>
<dbReference type="EMBL" id="AY723838">
    <property type="protein sequence ID" value="AAU09755.1"/>
    <property type="molecule type" value="Genomic_DNA"/>
</dbReference>
<dbReference type="EMBL" id="BK006943">
    <property type="protein sequence ID" value="DAA08872.1"/>
    <property type="molecule type" value="Genomic_DNA"/>
</dbReference>
<dbReference type="PIR" id="S57107">
    <property type="entry name" value="S57107"/>
</dbReference>
<dbReference type="RefSeq" id="NP_012621.1">
    <property type="nucleotide sequence ID" value="NM_001181745.1"/>
</dbReference>
<dbReference type="PDB" id="6WB9">
    <property type="method" value="EM"/>
    <property type="resolution" value="3.00 A"/>
    <property type="chains" value="2=1-292"/>
</dbReference>
<dbReference type="PDB" id="7KRA">
    <property type="method" value="EM"/>
    <property type="resolution" value="3.20 A"/>
    <property type="chains" value="B=1-292"/>
</dbReference>
<dbReference type="PDB" id="7KTX">
    <property type="method" value="EM"/>
    <property type="resolution" value="4.30 A"/>
    <property type="chains" value="B=1-292"/>
</dbReference>
<dbReference type="PDBsum" id="6WB9"/>
<dbReference type="PDBsum" id="7KRA"/>
<dbReference type="PDBsum" id="7KTX"/>
<dbReference type="EMDB" id="EMD-21587"/>
<dbReference type="EMDB" id="EMD-23003"/>
<dbReference type="EMDB" id="EMD-23033"/>
<dbReference type="SMR" id="P47133"/>
<dbReference type="BioGRID" id="33842">
    <property type="interactions" value="198"/>
</dbReference>
<dbReference type="ComplexPortal" id="CPX-307">
    <property type="entry name" value="Endoplasmic Reticulum Membrane Complex"/>
</dbReference>
<dbReference type="DIP" id="DIP-7609N"/>
<dbReference type="FunCoup" id="P47133">
    <property type="interactions" value="228"/>
</dbReference>
<dbReference type="IntAct" id="P47133">
    <property type="interactions" value="19"/>
</dbReference>
<dbReference type="STRING" id="4932.YJR088C"/>
<dbReference type="TCDB" id="3.A.27.1.2">
    <property type="family name" value="the endoplasmic reticulum membrane protein insertion complex (emc) family"/>
</dbReference>
<dbReference type="PaxDb" id="4932-YJR088C"/>
<dbReference type="PeptideAtlas" id="P47133"/>
<dbReference type="EnsemblFungi" id="YJR088C_mRNA">
    <property type="protein sequence ID" value="YJR088C"/>
    <property type="gene ID" value="YJR088C"/>
</dbReference>
<dbReference type="GeneID" id="853550"/>
<dbReference type="KEGG" id="sce:YJR088C"/>
<dbReference type="AGR" id="SGD:S000003848"/>
<dbReference type="SGD" id="S000003848">
    <property type="gene designation" value="EMC2"/>
</dbReference>
<dbReference type="VEuPathDB" id="FungiDB:YJR088C"/>
<dbReference type="eggNOG" id="KOG3060">
    <property type="taxonomic scope" value="Eukaryota"/>
</dbReference>
<dbReference type="GeneTree" id="ENSGT00390000011922"/>
<dbReference type="HOGENOM" id="CLU_065213_1_0_1"/>
<dbReference type="InParanoid" id="P47133"/>
<dbReference type="OMA" id="LMEMLFY"/>
<dbReference type="OrthoDB" id="124397at2759"/>
<dbReference type="BioCyc" id="YEAST:G3O-31715-MONOMER"/>
<dbReference type="BioGRID-ORCS" id="853550">
    <property type="hits" value="0 hits in 10 CRISPR screens"/>
</dbReference>
<dbReference type="PRO" id="PR:P47133"/>
<dbReference type="Proteomes" id="UP000002311">
    <property type="component" value="Chromosome X"/>
</dbReference>
<dbReference type="RNAct" id="P47133">
    <property type="molecule type" value="protein"/>
</dbReference>
<dbReference type="GO" id="GO:0072546">
    <property type="term" value="C:EMC complex"/>
    <property type="evidence" value="ECO:0000314"/>
    <property type="project" value="UniProtKB"/>
</dbReference>
<dbReference type="GO" id="GO:0005783">
    <property type="term" value="C:endoplasmic reticulum"/>
    <property type="evidence" value="ECO:0007005"/>
    <property type="project" value="SGD"/>
</dbReference>
<dbReference type="GO" id="GO:0005634">
    <property type="term" value="C:nucleus"/>
    <property type="evidence" value="ECO:0007005"/>
    <property type="project" value="SGD"/>
</dbReference>
<dbReference type="GO" id="GO:0006644">
    <property type="term" value="P:phospholipid metabolic process"/>
    <property type="evidence" value="ECO:0000314"/>
    <property type="project" value="ComplexPortal"/>
</dbReference>
<dbReference type="GO" id="GO:0015914">
    <property type="term" value="P:phospholipid transport"/>
    <property type="evidence" value="ECO:0000315"/>
    <property type="project" value="ComplexPortal"/>
</dbReference>
<dbReference type="GO" id="GO:0034975">
    <property type="term" value="P:protein folding in endoplasmic reticulum"/>
    <property type="evidence" value="ECO:0007003"/>
    <property type="project" value="SGD"/>
</dbReference>
<dbReference type="GO" id="GO:0045050">
    <property type="term" value="P:protein insertion into ER membrane by stop-transfer membrane-anchor sequence"/>
    <property type="evidence" value="ECO:0000315"/>
    <property type="project" value="UniProtKB"/>
</dbReference>
<dbReference type="Gene3D" id="1.25.40.10">
    <property type="entry name" value="Tetratricopeptide repeat domain"/>
    <property type="match status" value="1"/>
</dbReference>
<dbReference type="InterPro" id="IPR039856">
    <property type="entry name" value="EMC2-like"/>
</dbReference>
<dbReference type="InterPro" id="IPR011990">
    <property type="entry name" value="TPR-like_helical_dom_sf"/>
</dbReference>
<dbReference type="InterPro" id="IPR019734">
    <property type="entry name" value="TPR_rpt"/>
</dbReference>
<dbReference type="PANTHER" id="PTHR12760">
    <property type="entry name" value="TETRATRICOPEPTIDE REPEAT PROTEIN"/>
    <property type="match status" value="1"/>
</dbReference>
<dbReference type="SUPFAM" id="SSF48452">
    <property type="entry name" value="TPR-like"/>
    <property type="match status" value="1"/>
</dbReference>
<dbReference type="PROSITE" id="PS50005">
    <property type="entry name" value="TPR"/>
    <property type="match status" value="1"/>
</dbReference>
<protein>
    <recommendedName>
        <fullName evidence="7">ER membrane protein complex subunit 2</fullName>
    </recommendedName>
</protein>
<comment type="function">
    <text evidence="1 6">Part of the endoplasmic reticulum membrane protein complex (EMC) that enables the energy-independent insertion into endoplasmic reticulum membranes of newly synthesized membrane proteins (PubMed:29809151). Preferentially accommodates proteins with transmembrane domains that are weakly hydrophobic or contain destabilizing features such as charged and aromatic residues (PubMed:29809151). Involved in the cotranslational insertion of multi-pass membrane proteins in which stop-transfer membrane-anchor sequences become ER membrane spanning helices (PubMed:29809151). It is also required for the post-translational insertion of tail-anchored/TA proteins in endoplasmic reticulum membranes. By mediating the proper cotranslational insertion of N-terminal transmembrane domains in an N-exo topology, with translocated N-terminus in the lumen of the ER, controls the topology of multi-pass membrane proteins (By similarity).</text>
</comment>
<comment type="subunit">
    <text evidence="5 6">Component of the ER membrane protein complex (EMC), which is composed of EMC1, EMC2, EMC3, EMC4, EMC5 and EMC6.</text>
</comment>
<comment type="interaction">
    <interactant intactId="EBI-25568">
        <id>P47133</id>
    </interactant>
    <interactant intactId="EBI-12501">
        <id>P80967</id>
        <label>TOM5</label>
    </interactant>
    <organismsDiffer>false</organismsDiffer>
    <experiments>3</experiments>
</comment>
<comment type="subcellular location">
    <subcellularLocation>
        <location evidence="3">Endoplasmic reticulum membrane</location>
        <topology evidence="1">Peripheral membrane protein</topology>
        <orientation evidence="1">Cytoplasmic side</orientation>
    </subcellularLocation>
</comment>
<comment type="miscellaneous">
    <text evidence="4">Present with 5740 molecules/cell in log phase SD medium.</text>
</comment>
<comment type="similarity">
    <text evidence="7">Belongs to the EMC2 family.</text>
</comment>
<feature type="chain" id="PRO_0000203107" description="ER membrane protein complex subunit 2">
    <location>
        <begin position="1"/>
        <end position="292"/>
    </location>
</feature>
<feature type="repeat" description="TPR" evidence="2">
    <location>
        <begin position="163"/>
        <end position="196"/>
    </location>
</feature>
<feature type="sequence conflict" description="In Ref. 4; AAU09755." evidence="7" ref="4">
    <original>T</original>
    <variation>P</variation>
    <location>
        <position position="20"/>
    </location>
</feature>
<feature type="helix" evidence="8">
    <location>
        <begin position="2"/>
        <end position="15"/>
    </location>
</feature>
<feature type="helix" evidence="8">
    <location>
        <begin position="18"/>
        <end position="21"/>
    </location>
</feature>
<feature type="helix" evidence="8">
    <location>
        <begin position="24"/>
        <end position="38"/>
    </location>
</feature>
<feature type="strand" evidence="8">
    <location>
        <begin position="43"/>
        <end position="45"/>
    </location>
</feature>
<feature type="helix" evidence="8">
    <location>
        <begin position="47"/>
        <end position="63"/>
    </location>
</feature>
<feature type="helix" evidence="8">
    <location>
        <begin position="67"/>
        <end position="80"/>
    </location>
</feature>
<feature type="helix" evidence="8">
    <location>
        <begin position="86"/>
        <end position="98"/>
    </location>
</feature>
<feature type="helix" evidence="8">
    <location>
        <begin position="102"/>
        <end position="115"/>
    </location>
</feature>
<feature type="strand" evidence="8">
    <location>
        <begin position="116"/>
        <end position="119"/>
    </location>
</feature>
<feature type="helix" evidence="8">
    <location>
        <begin position="123"/>
        <end position="141"/>
    </location>
</feature>
<feature type="helix" evidence="8">
    <location>
        <begin position="145"/>
        <end position="157"/>
    </location>
</feature>
<feature type="helix" evidence="8">
    <location>
        <begin position="163"/>
        <end position="175"/>
    </location>
</feature>
<feature type="helix" evidence="8">
    <location>
        <begin position="179"/>
        <end position="192"/>
    </location>
</feature>
<feature type="helix" evidence="8">
    <location>
        <begin position="197"/>
        <end position="214"/>
    </location>
</feature>
<feature type="helix" evidence="8">
    <location>
        <begin position="218"/>
        <end position="235"/>
    </location>
</feature>
<feature type="helix" evidence="8">
    <location>
        <begin position="241"/>
        <end position="254"/>
    </location>
</feature>
<feature type="helix" evidence="8">
    <location>
        <begin position="263"/>
        <end position="276"/>
    </location>
</feature>
<feature type="helix" evidence="8">
    <location>
        <begin position="279"/>
        <end position="289"/>
    </location>
</feature>
<name>EMC2_YEAST</name>
<keyword id="KW-0002">3D-structure</keyword>
<keyword id="KW-0256">Endoplasmic reticulum</keyword>
<keyword id="KW-0472">Membrane</keyword>
<keyword id="KW-1185">Reference proteome</keyword>
<keyword id="KW-0802">TPR repeat</keyword>
<organism>
    <name type="scientific">Saccharomyces cerevisiae (strain ATCC 204508 / S288c)</name>
    <name type="common">Baker's yeast</name>
    <dbReference type="NCBI Taxonomy" id="559292"/>
    <lineage>
        <taxon>Eukaryota</taxon>
        <taxon>Fungi</taxon>
        <taxon>Dikarya</taxon>
        <taxon>Ascomycota</taxon>
        <taxon>Saccharomycotina</taxon>
        <taxon>Saccharomycetes</taxon>
        <taxon>Saccharomycetales</taxon>
        <taxon>Saccharomycetaceae</taxon>
        <taxon>Saccharomyces</taxon>
    </lineage>
</organism>
<reference key="1">
    <citation type="journal article" date="1996" name="Yeast">
        <title>Analysis of a 62 kb DNA sequence of chromosome X reveals 36 open reading frames and a gene cluster with a counterpart on chromosome XI.</title>
        <authorList>
            <person name="Huang M.-E."/>
            <person name="Manus V."/>
            <person name="Chuat J.-C."/>
            <person name="Galibert F."/>
        </authorList>
    </citation>
    <scope>NUCLEOTIDE SEQUENCE [GENOMIC DNA]</scope>
    <source>
        <strain>ATCC 204508 / S288c</strain>
    </source>
</reference>
<reference key="2">
    <citation type="journal article" date="1996" name="EMBO J.">
        <title>Complete nucleotide sequence of Saccharomyces cerevisiae chromosome X.</title>
        <authorList>
            <person name="Galibert F."/>
            <person name="Alexandraki D."/>
            <person name="Baur A."/>
            <person name="Boles E."/>
            <person name="Chalwatzis N."/>
            <person name="Chuat J.-C."/>
            <person name="Coster F."/>
            <person name="Cziepluch C."/>
            <person name="de Haan M."/>
            <person name="Domdey H."/>
            <person name="Durand P."/>
            <person name="Entian K.-D."/>
            <person name="Gatius M."/>
            <person name="Goffeau A."/>
            <person name="Grivell L.A."/>
            <person name="Hennemann A."/>
            <person name="Herbert C.J."/>
            <person name="Heumann K."/>
            <person name="Hilger F."/>
            <person name="Hollenberg C.P."/>
            <person name="Huang M.-E."/>
            <person name="Jacq C."/>
            <person name="Jauniaux J.-C."/>
            <person name="Katsoulou C."/>
            <person name="Kirchrath L."/>
            <person name="Kleine K."/>
            <person name="Kordes E."/>
            <person name="Koetter P."/>
            <person name="Liebl S."/>
            <person name="Louis E.J."/>
            <person name="Manus V."/>
            <person name="Mewes H.-W."/>
            <person name="Miosga T."/>
            <person name="Obermaier B."/>
            <person name="Perea J."/>
            <person name="Pohl T.M."/>
            <person name="Portetelle D."/>
            <person name="Pujol A."/>
            <person name="Purnelle B."/>
            <person name="Ramezani Rad M."/>
            <person name="Rasmussen S.W."/>
            <person name="Rose M."/>
            <person name="Rossau R."/>
            <person name="Schaaff-Gerstenschlaeger I."/>
            <person name="Smits P.H.M."/>
            <person name="Scarcez T."/>
            <person name="Soriano N."/>
            <person name="To Van D."/>
            <person name="Tzermia M."/>
            <person name="Van Broekhoven A."/>
            <person name="Vandenbol M."/>
            <person name="Wedler H."/>
            <person name="von Wettstein D."/>
            <person name="Wambutt R."/>
            <person name="Zagulski M."/>
            <person name="Zollner A."/>
            <person name="Karpfinger-Hartl L."/>
        </authorList>
    </citation>
    <scope>NUCLEOTIDE SEQUENCE [LARGE SCALE GENOMIC DNA]</scope>
    <source>
        <strain>ATCC 204508 / S288c</strain>
    </source>
</reference>
<reference key="3">
    <citation type="journal article" date="2014" name="G3 (Bethesda)">
        <title>The reference genome sequence of Saccharomyces cerevisiae: Then and now.</title>
        <authorList>
            <person name="Engel S.R."/>
            <person name="Dietrich F.S."/>
            <person name="Fisk D.G."/>
            <person name="Binkley G."/>
            <person name="Balakrishnan R."/>
            <person name="Costanzo M.C."/>
            <person name="Dwight S.S."/>
            <person name="Hitz B.C."/>
            <person name="Karra K."/>
            <person name="Nash R.S."/>
            <person name="Weng S."/>
            <person name="Wong E.D."/>
            <person name="Lloyd P."/>
            <person name="Skrzypek M.S."/>
            <person name="Miyasato S.R."/>
            <person name="Simison M."/>
            <person name="Cherry J.M."/>
        </authorList>
    </citation>
    <scope>GENOME REANNOTATION</scope>
    <source>
        <strain>ATCC 204508 / S288c</strain>
    </source>
</reference>
<reference key="4">
    <citation type="journal article" date="2007" name="Genome Res.">
        <title>Approaching a complete repository of sequence-verified protein-encoding clones for Saccharomyces cerevisiae.</title>
        <authorList>
            <person name="Hu Y."/>
            <person name="Rolfs A."/>
            <person name="Bhullar B."/>
            <person name="Murthy T.V.S."/>
            <person name="Zhu C."/>
            <person name="Berger M.F."/>
            <person name="Camargo A.A."/>
            <person name="Kelley F."/>
            <person name="McCarron S."/>
            <person name="Jepson D."/>
            <person name="Richardson A."/>
            <person name="Raphael J."/>
            <person name="Moreira D."/>
            <person name="Taycher E."/>
            <person name="Zuo D."/>
            <person name="Mohr S."/>
            <person name="Kane M.F."/>
            <person name="Williamson J."/>
            <person name="Simpson A.J.G."/>
            <person name="Bulyk M.L."/>
            <person name="Harlow E."/>
            <person name="Marsischky G."/>
            <person name="Kolodner R.D."/>
            <person name="LaBaer J."/>
        </authorList>
    </citation>
    <scope>NUCLEOTIDE SEQUENCE [GENOMIC DNA]</scope>
    <source>
        <strain>ATCC 204508 / S288c</strain>
    </source>
</reference>
<reference key="5">
    <citation type="journal article" date="2003" name="Nature">
        <title>Global analysis of protein localization in budding yeast.</title>
        <authorList>
            <person name="Huh W.-K."/>
            <person name="Falvo J.V."/>
            <person name="Gerke L.C."/>
            <person name="Carroll A.S."/>
            <person name="Howson R.W."/>
            <person name="Weissman J.S."/>
            <person name="O'Shea E.K."/>
        </authorList>
    </citation>
    <scope>SUBCELLULAR LOCATION [LARGE SCALE ANALYSIS]</scope>
</reference>
<reference key="6">
    <citation type="journal article" date="2003" name="Nature">
        <title>Global analysis of protein expression in yeast.</title>
        <authorList>
            <person name="Ghaemmaghami S."/>
            <person name="Huh W.-K."/>
            <person name="Bower K."/>
            <person name="Howson R.W."/>
            <person name="Belle A."/>
            <person name="Dephoure N."/>
            <person name="O'Shea E.K."/>
            <person name="Weissman J.S."/>
        </authorList>
    </citation>
    <scope>LEVEL OF PROTEIN EXPRESSION [LARGE SCALE ANALYSIS]</scope>
</reference>
<reference key="7">
    <citation type="journal article" date="2009" name="Science">
        <title>Comprehensive characterization of genes required for protein folding in the endoplasmic reticulum.</title>
        <authorList>
            <person name="Jonikas M.C."/>
            <person name="Collins S.R."/>
            <person name="Denic V."/>
            <person name="Oh E."/>
            <person name="Quan E.M."/>
            <person name="Schmid V."/>
            <person name="Weibezahn J."/>
            <person name="Schwappach B."/>
            <person name="Walter P."/>
            <person name="Weissman J.S."/>
            <person name="Schuldiner M."/>
        </authorList>
    </citation>
    <scope>IDENTIFICATION IN EMC COMPLEX</scope>
</reference>
<reference key="8">
    <citation type="journal article" date="2012" name="Proc. Natl. Acad. Sci. U.S.A.">
        <title>N-terminal acetylome analyses and functional insights of the N-terminal acetyltransferase NatB.</title>
        <authorList>
            <person name="Van Damme P."/>
            <person name="Lasa M."/>
            <person name="Polevoda B."/>
            <person name="Gazquez C."/>
            <person name="Elosegui-Artola A."/>
            <person name="Kim D.S."/>
            <person name="De Juan-Pardo E."/>
            <person name="Demeyer K."/>
            <person name="Hole K."/>
            <person name="Larrea E."/>
            <person name="Timmerman E."/>
            <person name="Prieto J."/>
            <person name="Arnesen T."/>
            <person name="Sherman F."/>
            <person name="Gevaert K."/>
            <person name="Aldabe R."/>
        </authorList>
    </citation>
    <scope>IDENTIFICATION BY MASS SPECTROMETRY [LARGE SCALE ANALYSIS]</scope>
</reference>
<reference key="9">
    <citation type="journal article" date="2018" name="Elife">
        <title>The ER membrane protein complex interacts cotranslationally to enable biogenesis of multipass membrane proteins.</title>
        <authorList>
            <person name="Shurtleff M.J."/>
            <person name="Itzhak D.N."/>
            <person name="Hussmann J.A."/>
            <person name="Schirle Oakdale N.T."/>
            <person name="Costa E.A."/>
            <person name="Jonikas M."/>
            <person name="Weibezahn J."/>
            <person name="Popova K.D."/>
            <person name="Jan C.H."/>
            <person name="Sinitcyn P."/>
            <person name="Vembar S.S."/>
            <person name="Hernandez H."/>
            <person name="Cox J."/>
            <person name="Burlingame A.L."/>
            <person name="Brodsky J.L."/>
            <person name="Frost A."/>
            <person name="Borner G.H."/>
            <person name="Weissman J.S."/>
        </authorList>
    </citation>
    <scope>FUNCTION</scope>
    <scope>SUBUNIT</scope>
</reference>
<evidence type="ECO:0000250" key="1">
    <source>
        <dbReference type="UniProtKB" id="Q15006"/>
    </source>
</evidence>
<evidence type="ECO:0000255" key="2"/>
<evidence type="ECO:0000269" key="3">
    <source>
    </source>
</evidence>
<evidence type="ECO:0000269" key="4">
    <source>
    </source>
</evidence>
<evidence type="ECO:0000269" key="5">
    <source>
    </source>
</evidence>
<evidence type="ECO:0000269" key="6">
    <source>
    </source>
</evidence>
<evidence type="ECO:0000305" key="7"/>
<evidence type="ECO:0007829" key="8">
    <source>
        <dbReference type="PDB" id="6WB9"/>
    </source>
</evidence>